<gene>
    <name type="primary">Bmpr2</name>
</gene>
<accession>O35607</accession>
<feature type="signal peptide" evidence="3">
    <location>
        <begin position="1"/>
        <end position="26"/>
    </location>
</feature>
<feature type="chain" id="PRO_0000024416" description="Bone morphogenetic protein receptor type-2">
    <location>
        <begin position="27"/>
        <end position="1038"/>
    </location>
</feature>
<feature type="topological domain" description="Extracellular" evidence="3">
    <location>
        <begin position="27"/>
        <end position="150"/>
    </location>
</feature>
<feature type="transmembrane region" description="Helical" evidence="3">
    <location>
        <begin position="151"/>
        <end position="171"/>
    </location>
</feature>
<feature type="topological domain" description="Cytoplasmic" evidence="3">
    <location>
        <begin position="172"/>
        <end position="1038"/>
    </location>
</feature>
<feature type="domain" description="Protein kinase" evidence="4">
    <location>
        <begin position="203"/>
        <end position="504"/>
    </location>
</feature>
<feature type="region of interest" description="Disordered" evidence="5">
    <location>
        <begin position="593"/>
        <end position="626"/>
    </location>
</feature>
<feature type="region of interest" description="Disordered" evidence="5">
    <location>
        <begin position="746"/>
        <end position="769"/>
    </location>
</feature>
<feature type="region of interest" description="Disordered" evidence="5">
    <location>
        <begin position="872"/>
        <end position="974"/>
    </location>
</feature>
<feature type="compositionally biased region" description="Low complexity" evidence="5">
    <location>
        <begin position="603"/>
        <end position="626"/>
    </location>
</feature>
<feature type="compositionally biased region" description="Basic and acidic residues" evidence="5">
    <location>
        <begin position="872"/>
        <end position="896"/>
    </location>
</feature>
<feature type="compositionally biased region" description="Polar residues" evidence="5">
    <location>
        <begin position="909"/>
        <end position="924"/>
    </location>
</feature>
<feature type="compositionally biased region" description="Polar residues" evidence="5">
    <location>
        <begin position="937"/>
        <end position="964"/>
    </location>
</feature>
<feature type="active site" description="Proton acceptor" evidence="4">
    <location>
        <position position="333"/>
    </location>
</feature>
<feature type="binding site" evidence="4">
    <location>
        <begin position="209"/>
        <end position="217"/>
    </location>
    <ligand>
        <name>ATP</name>
        <dbReference type="ChEBI" id="CHEBI:30616"/>
    </ligand>
</feature>
<feature type="binding site" evidence="4">
    <location>
        <position position="230"/>
    </location>
    <ligand>
        <name>ATP</name>
        <dbReference type="ChEBI" id="CHEBI:30616"/>
    </ligand>
</feature>
<feature type="binding site" evidence="4">
    <location>
        <begin position="280"/>
        <end position="282"/>
    </location>
    <ligand>
        <name>ATP</name>
        <dbReference type="ChEBI" id="CHEBI:30616"/>
    </ligand>
</feature>
<feature type="binding site" evidence="4">
    <location>
        <begin position="337"/>
        <end position="338"/>
    </location>
    <ligand>
        <name>ATP</name>
        <dbReference type="ChEBI" id="CHEBI:30616"/>
    </ligand>
</feature>
<feature type="binding site" evidence="4">
    <location>
        <position position="351"/>
    </location>
    <ligand>
        <name>ATP</name>
        <dbReference type="ChEBI" id="CHEBI:30616"/>
    </ligand>
</feature>
<feature type="modified residue" description="Phosphothreonine" evidence="2">
    <location>
        <position position="379"/>
    </location>
</feature>
<feature type="modified residue" description="Phosphoserine" evidence="2">
    <location>
        <position position="586"/>
    </location>
</feature>
<feature type="modified residue" description="Phosphoserine" evidence="8">
    <location>
        <position position="680"/>
    </location>
</feature>
<feature type="modified residue" description="Phosphoserine" evidence="8">
    <location>
        <position position="681"/>
    </location>
</feature>
<feature type="modified residue" description="Phosphoserine" evidence="8">
    <location>
        <position position="843"/>
    </location>
</feature>
<feature type="glycosylation site" description="N-linked (GlcNAc...) asparagine" evidence="3">
    <location>
        <position position="55"/>
    </location>
</feature>
<feature type="glycosylation site" description="N-linked (GlcNAc...) asparagine" evidence="3">
    <location>
        <position position="110"/>
    </location>
</feature>
<feature type="glycosylation site" description="N-linked (GlcNAc...) asparagine" evidence="3">
    <location>
        <position position="126"/>
    </location>
</feature>
<feature type="disulfide bond" evidence="2">
    <location>
        <begin position="34"/>
        <end position="66"/>
    </location>
</feature>
<feature type="disulfide bond" evidence="2">
    <location>
        <begin position="60"/>
        <end position="84"/>
    </location>
</feature>
<feature type="disulfide bond" evidence="2">
    <location>
        <begin position="94"/>
        <end position="117"/>
    </location>
</feature>
<feature type="disulfide bond" evidence="2">
    <location>
        <begin position="99"/>
        <end position="116"/>
    </location>
</feature>
<feature type="disulfide bond" evidence="2">
    <location>
        <begin position="118"/>
        <end position="123"/>
    </location>
</feature>
<keyword id="KW-0067">ATP-binding</keyword>
<keyword id="KW-1003">Cell membrane</keyword>
<keyword id="KW-1015">Disulfide bond</keyword>
<keyword id="KW-0325">Glycoprotein</keyword>
<keyword id="KW-0418">Kinase</keyword>
<keyword id="KW-0460">Magnesium</keyword>
<keyword id="KW-0464">Manganese</keyword>
<keyword id="KW-0472">Membrane</keyword>
<keyword id="KW-0479">Metal-binding</keyword>
<keyword id="KW-0547">Nucleotide-binding</keyword>
<keyword id="KW-0597">Phosphoprotein</keyword>
<keyword id="KW-0675">Receptor</keyword>
<keyword id="KW-1185">Reference proteome</keyword>
<keyword id="KW-0723">Serine/threonine-protein kinase</keyword>
<keyword id="KW-0732">Signal</keyword>
<keyword id="KW-0808">Transferase</keyword>
<keyword id="KW-0812">Transmembrane</keyword>
<keyword id="KW-1133">Transmembrane helix</keyword>
<protein>
    <recommendedName>
        <fullName>Bone morphogenetic protein receptor type-2</fullName>
        <shortName>BMP type-2 receptor</shortName>
        <shortName>BMPR-2</shortName>
        <ecNumber>2.7.11.30</ecNumber>
    </recommendedName>
    <alternativeName>
        <fullName>BRK-3</fullName>
    </alternativeName>
    <alternativeName>
        <fullName>Bone morphogenetic protein receptor type II</fullName>
        <shortName>BMP type II receptor</shortName>
        <shortName>BMPR-II</shortName>
    </alternativeName>
</protein>
<evidence type="ECO:0000250" key="1"/>
<evidence type="ECO:0000250" key="2">
    <source>
        <dbReference type="UniProtKB" id="Q13873"/>
    </source>
</evidence>
<evidence type="ECO:0000255" key="3"/>
<evidence type="ECO:0000255" key="4">
    <source>
        <dbReference type="PROSITE-ProRule" id="PRU00159"/>
    </source>
</evidence>
<evidence type="ECO:0000256" key="5">
    <source>
        <dbReference type="SAM" id="MobiDB-lite"/>
    </source>
</evidence>
<evidence type="ECO:0000269" key="6">
    <source>
    </source>
</evidence>
<evidence type="ECO:0000305" key="7"/>
<evidence type="ECO:0007744" key="8">
    <source>
    </source>
</evidence>
<dbReference type="EC" id="2.7.11.30"/>
<dbReference type="EMBL" id="AF003942">
    <property type="protein sequence ID" value="AAB63042.1"/>
    <property type="molecule type" value="mRNA"/>
</dbReference>
<dbReference type="EMBL" id="U78048">
    <property type="protein sequence ID" value="AAB87638.1"/>
    <property type="molecule type" value="mRNA"/>
</dbReference>
<dbReference type="CCDS" id="CCDS35588.1"/>
<dbReference type="PIR" id="JC5527">
    <property type="entry name" value="JC5527"/>
</dbReference>
<dbReference type="RefSeq" id="NP_031587.1">
    <property type="nucleotide sequence ID" value="NM_007561.4"/>
</dbReference>
<dbReference type="BMRB" id="O35607"/>
<dbReference type="SMR" id="O35607"/>
<dbReference type="BioGRID" id="198373">
    <property type="interactions" value="15"/>
</dbReference>
<dbReference type="ELM" id="O35607"/>
<dbReference type="FunCoup" id="O35607">
    <property type="interactions" value="1732"/>
</dbReference>
<dbReference type="IntAct" id="O35607">
    <property type="interactions" value="3"/>
</dbReference>
<dbReference type="MINT" id="O35607"/>
<dbReference type="STRING" id="10090.ENSMUSP00000084701"/>
<dbReference type="GlyConnect" id="2160">
    <property type="glycosylation" value="1 N-Linked glycan (1 site)"/>
</dbReference>
<dbReference type="GlyCosmos" id="O35607">
    <property type="glycosylation" value="3 sites, 1 glycan"/>
</dbReference>
<dbReference type="GlyGen" id="O35607">
    <property type="glycosylation" value="7 sites, 2 N-linked glycans (1 site), 1 O-linked glycan (3 sites)"/>
</dbReference>
<dbReference type="iPTMnet" id="O35607"/>
<dbReference type="PhosphoSitePlus" id="O35607"/>
<dbReference type="SwissPalm" id="O35607"/>
<dbReference type="jPOST" id="O35607"/>
<dbReference type="PaxDb" id="10090-ENSMUSP00000084701"/>
<dbReference type="PeptideAtlas" id="O35607"/>
<dbReference type="ProteomicsDB" id="265314"/>
<dbReference type="Pumba" id="O35607"/>
<dbReference type="Antibodypedia" id="19946">
    <property type="antibodies" value="530 antibodies from 37 providers"/>
</dbReference>
<dbReference type="DNASU" id="12168"/>
<dbReference type="Ensembl" id="ENSMUST00000087435.7">
    <property type="protein sequence ID" value="ENSMUSP00000084701.6"/>
    <property type="gene ID" value="ENSMUSG00000067336.7"/>
</dbReference>
<dbReference type="GeneID" id="12168"/>
<dbReference type="KEGG" id="mmu:12168"/>
<dbReference type="UCSC" id="uc007bdz.2">
    <property type="organism name" value="mouse"/>
</dbReference>
<dbReference type="AGR" id="MGI:1095407"/>
<dbReference type="CTD" id="659"/>
<dbReference type="MGI" id="MGI:1095407">
    <property type="gene designation" value="Bmpr2"/>
</dbReference>
<dbReference type="VEuPathDB" id="HostDB:ENSMUSG00000067336"/>
<dbReference type="eggNOG" id="KOG3653">
    <property type="taxonomic scope" value="Eukaryota"/>
</dbReference>
<dbReference type="GeneTree" id="ENSGT00940000156449"/>
<dbReference type="HOGENOM" id="CLU_013015_0_0_1"/>
<dbReference type="InParanoid" id="O35607"/>
<dbReference type="OMA" id="NTVAHRG"/>
<dbReference type="OrthoDB" id="45996at9989"/>
<dbReference type="PhylomeDB" id="O35607"/>
<dbReference type="TreeFam" id="TF314724"/>
<dbReference type="BRENDA" id="2.7.10.2">
    <property type="organism ID" value="3474"/>
</dbReference>
<dbReference type="Reactome" id="R-MMU-201451">
    <property type="pathway name" value="Signaling by BMP"/>
</dbReference>
<dbReference type="BioGRID-ORCS" id="12168">
    <property type="hits" value="6 hits in 82 CRISPR screens"/>
</dbReference>
<dbReference type="ChiTaRS" id="Bmpr2">
    <property type="organism name" value="mouse"/>
</dbReference>
<dbReference type="PRO" id="PR:O35607"/>
<dbReference type="Proteomes" id="UP000000589">
    <property type="component" value="Chromosome 1"/>
</dbReference>
<dbReference type="RNAct" id="O35607">
    <property type="molecule type" value="protein"/>
</dbReference>
<dbReference type="Bgee" id="ENSMUSG00000067336">
    <property type="expression patterns" value="Expressed in cumulus cell and 237 other cell types or tissues"/>
</dbReference>
<dbReference type="GO" id="GO:0005912">
    <property type="term" value="C:adherens junction"/>
    <property type="evidence" value="ECO:0007669"/>
    <property type="project" value="Ensembl"/>
</dbReference>
<dbReference type="GO" id="GO:0016324">
    <property type="term" value="C:apical plasma membrane"/>
    <property type="evidence" value="ECO:0007669"/>
    <property type="project" value="Ensembl"/>
</dbReference>
<dbReference type="GO" id="GO:0030424">
    <property type="term" value="C:axon"/>
    <property type="evidence" value="ECO:0000314"/>
    <property type="project" value="MGI"/>
</dbReference>
<dbReference type="GO" id="GO:0009925">
    <property type="term" value="C:basal plasma membrane"/>
    <property type="evidence" value="ECO:0007669"/>
    <property type="project" value="Ensembl"/>
</dbReference>
<dbReference type="GO" id="GO:0005901">
    <property type="term" value="C:caveola"/>
    <property type="evidence" value="ECO:0007669"/>
    <property type="project" value="Ensembl"/>
</dbReference>
<dbReference type="GO" id="GO:0044297">
    <property type="term" value="C:cell body"/>
    <property type="evidence" value="ECO:0000314"/>
    <property type="project" value="MGI"/>
</dbReference>
<dbReference type="GO" id="GO:0009986">
    <property type="term" value="C:cell surface"/>
    <property type="evidence" value="ECO:0000314"/>
    <property type="project" value="MGI"/>
</dbReference>
<dbReference type="GO" id="GO:0005905">
    <property type="term" value="C:clathrin-coated pit"/>
    <property type="evidence" value="ECO:0000314"/>
    <property type="project" value="MGI"/>
</dbReference>
<dbReference type="GO" id="GO:0030425">
    <property type="term" value="C:dendrite"/>
    <property type="evidence" value="ECO:0000314"/>
    <property type="project" value="MGI"/>
</dbReference>
<dbReference type="GO" id="GO:0043025">
    <property type="term" value="C:neuronal cell body"/>
    <property type="evidence" value="ECO:0007669"/>
    <property type="project" value="Ensembl"/>
</dbReference>
<dbReference type="GO" id="GO:0005654">
    <property type="term" value="C:nucleoplasm"/>
    <property type="evidence" value="ECO:0007669"/>
    <property type="project" value="Ensembl"/>
</dbReference>
<dbReference type="GO" id="GO:0005886">
    <property type="term" value="C:plasma membrane"/>
    <property type="evidence" value="ECO:0000314"/>
    <property type="project" value="MGI"/>
</dbReference>
<dbReference type="GO" id="GO:0014069">
    <property type="term" value="C:postsynaptic density"/>
    <property type="evidence" value="ECO:0000314"/>
    <property type="project" value="MGI"/>
</dbReference>
<dbReference type="GO" id="GO:0016362">
    <property type="term" value="F:activin receptor activity, type II"/>
    <property type="evidence" value="ECO:0007669"/>
    <property type="project" value="Ensembl"/>
</dbReference>
<dbReference type="GO" id="GO:0005524">
    <property type="term" value="F:ATP binding"/>
    <property type="evidence" value="ECO:0007669"/>
    <property type="project" value="UniProtKB-KW"/>
</dbReference>
<dbReference type="GO" id="GO:0036122">
    <property type="term" value="F:BMP binding"/>
    <property type="evidence" value="ECO:0000314"/>
    <property type="project" value="MGI"/>
</dbReference>
<dbReference type="GO" id="GO:0098821">
    <property type="term" value="F:BMP receptor activity"/>
    <property type="evidence" value="ECO:0000314"/>
    <property type="project" value="MGI"/>
</dbReference>
<dbReference type="GO" id="GO:0045296">
    <property type="term" value="F:cadherin binding"/>
    <property type="evidence" value="ECO:0007669"/>
    <property type="project" value="Ensembl"/>
</dbReference>
<dbReference type="GO" id="GO:0019838">
    <property type="term" value="F:growth factor binding"/>
    <property type="evidence" value="ECO:0007669"/>
    <property type="project" value="Ensembl"/>
</dbReference>
<dbReference type="GO" id="GO:0046872">
    <property type="term" value="F:metal ion binding"/>
    <property type="evidence" value="ECO:0007669"/>
    <property type="project" value="UniProtKB-KW"/>
</dbReference>
<dbReference type="GO" id="GO:0004674">
    <property type="term" value="F:protein serine/threonine kinase activity"/>
    <property type="evidence" value="ECO:0000314"/>
    <property type="project" value="MGI"/>
</dbReference>
<dbReference type="GO" id="GO:1990782">
    <property type="term" value="F:protein tyrosine kinase binding"/>
    <property type="evidence" value="ECO:0007669"/>
    <property type="project" value="Ensembl"/>
</dbReference>
<dbReference type="GO" id="GO:0009952">
    <property type="term" value="P:anterior/posterior pattern specification"/>
    <property type="evidence" value="ECO:0000315"/>
    <property type="project" value="MGI"/>
</dbReference>
<dbReference type="GO" id="GO:0003176">
    <property type="term" value="P:aortic valve development"/>
    <property type="evidence" value="ECO:0000315"/>
    <property type="project" value="BHF-UCL"/>
</dbReference>
<dbReference type="GO" id="GO:0060840">
    <property type="term" value="P:artery development"/>
    <property type="evidence" value="ECO:0000315"/>
    <property type="project" value="BHF-UCL"/>
</dbReference>
<dbReference type="GO" id="GO:0060413">
    <property type="term" value="P:atrial septum morphogenesis"/>
    <property type="evidence" value="ECO:0000315"/>
    <property type="project" value="BHF-UCL"/>
</dbReference>
<dbReference type="GO" id="GO:0001974">
    <property type="term" value="P:blood vessel remodeling"/>
    <property type="evidence" value="ECO:0000315"/>
    <property type="project" value="BHF-UCL"/>
</dbReference>
<dbReference type="GO" id="GO:0030509">
    <property type="term" value="P:BMP signaling pathway"/>
    <property type="evidence" value="ECO:0000314"/>
    <property type="project" value="MGI"/>
</dbReference>
<dbReference type="GO" id="GO:0009267">
    <property type="term" value="P:cellular response to starvation"/>
    <property type="evidence" value="ECO:0007669"/>
    <property type="project" value="Ensembl"/>
</dbReference>
<dbReference type="GO" id="GO:0002063">
    <property type="term" value="P:chondrocyte development"/>
    <property type="evidence" value="ECO:0007669"/>
    <property type="project" value="Ensembl"/>
</dbReference>
<dbReference type="GO" id="GO:0003197">
    <property type="term" value="P:endocardial cushion development"/>
    <property type="evidence" value="ECO:0000315"/>
    <property type="project" value="BHF-UCL"/>
</dbReference>
<dbReference type="GO" id="GO:0060350">
    <property type="term" value="P:endochondral bone morphogenesis"/>
    <property type="evidence" value="ECO:0000250"/>
    <property type="project" value="AgBase"/>
</dbReference>
<dbReference type="GO" id="GO:0072577">
    <property type="term" value="P:endothelial cell apoptotic process"/>
    <property type="evidence" value="ECO:0007669"/>
    <property type="project" value="Ensembl"/>
</dbReference>
<dbReference type="GO" id="GO:0001935">
    <property type="term" value="P:endothelial cell proliferation"/>
    <property type="evidence" value="ECO:0007669"/>
    <property type="project" value="Ensembl"/>
</dbReference>
<dbReference type="GO" id="GO:0060173">
    <property type="term" value="P:limb development"/>
    <property type="evidence" value="ECO:0000316"/>
    <property type="project" value="MGI"/>
</dbReference>
<dbReference type="GO" id="GO:0048286">
    <property type="term" value="P:lung alveolus development"/>
    <property type="evidence" value="ECO:0000315"/>
    <property type="project" value="BHF-UCL"/>
</dbReference>
<dbReference type="GO" id="GO:0060426">
    <property type="term" value="P:lung vasculature development"/>
    <property type="evidence" value="ECO:0007669"/>
    <property type="project" value="Ensembl"/>
</dbReference>
<dbReference type="GO" id="GO:0001946">
    <property type="term" value="P:lymphangiogenesis"/>
    <property type="evidence" value="ECO:0000315"/>
    <property type="project" value="BHF-UCL"/>
</dbReference>
<dbReference type="GO" id="GO:0060836">
    <property type="term" value="P:lymphatic endothelial cell differentiation"/>
    <property type="evidence" value="ECO:0000315"/>
    <property type="project" value="BHF-UCL"/>
</dbReference>
<dbReference type="GO" id="GO:0001893">
    <property type="term" value="P:maternal placenta development"/>
    <property type="evidence" value="ECO:0000315"/>
    <property type="project" value="MGI"/>
</dbReference>
<dbReference type="GO" id="GO:0001707">
    <property type="term" value="P:mesoderm formation"/>
    <property type="evidence" value="ECO:0000315"/>
    <property type="project" value="MGI"/>
</dbReference>
<dbReference type="GO" id="GO:0003183">
    <property type="term" value="P:mitral valve morphogenesis"/>
    <property type="evidence" value="ECO:0000315"/>
    <property type="project" value="BHF-UCL"/>
</dbReference>
<dbReference type="GO" id="GO:0030308">
    <property type="term" value="P:negative regulation of cell growth"/>
    <property type="evidence" value="ECO:0007669"/>
    <property type="project" value="Ensembl"/>
</dbReference>
<dbReference type="GO" id="GO:0003252">
    <property type="term" value="P:negative regulation of cell proliferation involved in heart valve morphogenesis"/>
    <property type="evidence" value="ECO:0000315"/>
    <property type="project" value="BHF-UCL"/>
</dbReference>
<dbReference type="GO" id="GO:1902731">
    <property type="term" value="P:negative regulation of chondrocyte proliferation"/>
    <property type="evidence" value="ECO:0007669"/>
    <property type="project" value="Ensembl"/>
</dbReference>
<dbReference type="GO" id="GO:0051148">
    <property type="term" value="P:negative regulation of muscle cell differentiation"/>
    <property type="evidence" value="ECO:0000314"/>
    <property type="project" value="MGI"/>
</dbReference>
<dbReference type="GO" id="GO:0048662">
    <property type="term" value="P:negative regulation of smooth muscle cell proliferation"/>
    <property type="evidence" value="ECO:0007669"/>
    <property type="project" value="Ensembl"/>
</dbReference>
<dbReference type="GO" id="GO:0003085">
    <property type="term" value="P:negative regulation of systemic arterial blood pressure"/>
    <property type="evidence" value="ECO:0007669"/>
    <property type="project" value="Ensembl"/>
</dbReference>
<dbReference type="GO" id="GO:0045906">
    <property type="term" value="P:negative regulation of vasoconstriction"/>
    <property type="evidence" value="ECO:0000315"/>
    <property type="project" value="BHF-UCL"/>
</dbReference>
<dbReference type="GO" id="GO:0001649">
    <property type="term" value="P:osteoblast differentiation"/>
    <property type="evidence" value="ECO:0000314"/>
    <property type="project" value="MGI"/>
</dbReference>
<dbReference type="GO" id="GO:0003151">
    <property type="term" value="P:outflow tract morphogenesis"/>
    <property type="evidence" value="ECO:0000315"/>
    <property type="project" value="BHF-UCL"/>
</dbReference>
<dbReference type="GO" id="GO:0003148">
    <property type="term" value="P:outflow tract septum morphogenesis"/>
    <property type="evidence" value="ECO:0000315"/>
    <property type="project" value="BHF-UCL"/>
</dbReference>
<dbReference type="GO" id="GO:0061626">
    <property type="term" value="P:pharyngeal arch artery morphogenesis"/>
    <property type="evidence" value="ECO:0000315"/>
    <property type="project" value="BHF-UCL"/>
</dbReference>
<dbReference type="GO" id="GO:0048842">
    <property type="term" value="P:positive regulation of axon extension involved in axon guidance"/>
    <property type="evidence" value="ECO:0000315"/>
    <property type="project" value="UniProtKB"/>
</dbReference>
<dbReference type="GO" id="GO:0030501">
    <property type="term" value="P:positive regulation of bone mineralization"/>
    <property type="evidence" value="ECO:0007669"/>
    <property type="project" value="Ensembl"/>
</dbReference>
<dbReference type="GO" id="GO:0061036">
    <property type="term" value="P:positive regulation of cartilage development"/>
    <property type="evidence" value="ECO:0000250"/>
    <property type="project" value="AgBase"/>
</dbReference>
<dbReference type="GO" id="GO:0010634">
    <property type="term" value="P:positive regulation of epithelial cell migration"/>
    <property type="evidence" value="ECO:0007669"/>
    <property type="project" value="Ensembl"/>
</dbReference>
<dbReference type="GO" id="GO:0010628">
    <property type="term" value="P:positive regulation of gene expression"/>
    <property type="evidence" value="ECO:0007669"/>
    <property type="project" value="Ensembl"/>
</dbReference>
<dbReference type="GO" id="GO:0045778">
    <property type="term" value="P:positive regulation of ossification"/>
    <property type="evidence" value="ECO:0000315"/>
    <property type="project" value="BHF-UCL"/>
</dbReference>
<dbReference type="GO" id="GO:0045669">
    <property type="term" value="P:positive regulation of osteoblast differentiation"/>
    <property type="evidence" value="ECO:0007669"/>
    <property type="project" value="Ensembl"/>
</dbReference>
<dbReference type="GO" id="GO:0060391">
    <property type="term" value="P:positive regulation of SMAD protein signal transduction"/>
    <property type="evidence" value="ECO:0007669"/>
    <property type="project" value="Ensembl"/>
</dbReference>
<dbReference type="GO" id="GO:0045944">
    <property type="term" value="P:positive regulation of transcription by RNA polymerase II"/>
    <property type="evidence" value="ECO:0000315"/>
    <property type="project" value="BHF-UCL"/>
</dbReference>
<dbReference type="GO" id="GO:0030166">
    <property type="term" value="P:proteoglycan biosynthetic process"/>
    <property type="evidence" value="ECO:0000250"/>
    <property type="project" value="AgBase"/>
</dbReference>
<dbReference type="GO" id="GO:0003177">
    <property type="term" value="P:pulmonary valve development"/>
    <property type="evidence" value="ECO:0000315"/>
    <property type="project" value="BHF-UCL"/>
</dbReference>
<dbReference type="GO" id="GO:0014916">
    <property type="term" value="P:regulation of lung blood pressure"/>
    <property type="evidence" value="ECO:0000315"/>
    <property type="project" value="BHF-UCL"/>
</dbReference>
<dbReference type="GO" id="GO:0061298">
    <property type="term" value="P:retina vasculature development in camera-type eye"/>
    <property type="evidence" value="ECO:0000315"/>
    <property type="project" value="BHF-UCL"/>
</dbReference>
<dbReference type="GO" id="GO:1905314">
    <property type="term" value="P:semi-lunar valve development"/>
    <property type="evidence" value="ECO:0000315"/>
    <property type="project" value="BHF-UCL"/>
</dbReference>
<dbReference type="GO" id="GO:0048863">
    <property type="term" value="P:stem cell differentiation"/>
    <property type="evidence" value="ECO:0000303"/>
    <property type="project" value="UniProtKB"/>
</dbReference>
<dbReference type="GO" id="GO:0003186">
    <property type="term" value="P:tricuspid valve morphogenesis"/>
    <property type="evidence" value="ECO:0000315"/>
    <property type="project" value="BHF-UCL"/>
</dbReference>
<dbReference type="GO" id="GO:0060841">
    <property type="term" value="P:venous blood vessel development"/>
    <property type="evidence" value="ECO:0000315"/>
    <property type="project" value="BHF-UCL"/>
</dbReference>
<dbReference type="GO" id="GO:0060412">
    <property type="term" value="P:ventricular septum morphogenesis"/>
    <property type="evidence" value="ECO:0000315"/>
    <property type="project" value="BHF-UCL"/>
</dbReference>
<dbReference type="CDD" id="cd14054">
    <property type="entry name" value="STKc_BMPR2_AMHR2"/>
    <property type="match status" value="1"/>
</dbReference>
<dbReference type="CDD" id="cd23614">
    <property type="entry name" value="TFP_LU_ECD_BMPR2"/>
    <property type="match status" value="1"/>
</dbReference>
<dbReference type="FunFam" id="1.10.510.10:FF:000180">
    <property type="entry name" value="Receptor protein serine/threonine kinase"/>
    <property type="match status" value="1"/>
</dbReference>
<dbReference type="FunFam" id="2.10.60.10:FF:000006">
    <property type="entry name" value="Receptor protein serine/threonine kinase"/>
    <property type="match status" value="1"/>
</dbReference>
<dbReference type="FunFam" id="3.30.200.20:FF:000174">
    <property type="entry name" value="Receptor protein serine/threonine kinase"/>
    <property type="match status" value="1"/>
</dbReference>
<dbReference type="Gene3D" id="2.10.60.10">
    <property type="entry name" value="CD59"/>
    <property type="match status" value="1"/>
</dbReference>
<dbReference type="Gene3D" id="3.30.200.20">
    <property type="entry name" value="Phosphorylase Kinase, domain 1"/>
    <property type="match status" value="1"/>
</dbReference>
<dbReference type="Gene3D" id="1.10.510.10">
    <property type="entry name" value="Transferase(Phosphotransferase) domain 1"/>
    <property type="match status" value="1"/>
</dbReference>
<dbReference type="InterPro" id="IPR000472">
    <property type="entry name" value="Activin_recp"/>
</dbReference>
<dbReference type="InterPro" id="IPR011009">
    <property type="entry name" value="Kinase-like_dom_sf"/>
</dbReference>
<dbReference type="InterPro" id="IPR000719">
    <property type="entry name" value="Prot_kinase_dom"/>
</dbReference>
<dbReference type="InterPro" id="IPR017441">
    <property type="entry name" value="Protein_kinase_ATP_BS"/>
</dbReference>
<dbReference type="InterPro" id="IPR045860">
    <property type="entry name" value="Snake_toxin-like_sf"/>
</dbReference>
<dbReference type="InterPro" id="IPR000333">
    <property type="entry name" value="TGFB_receptor"/>
</dbReference>
<dbReference type="PANTHER" id="PTHR23255:SF63">
    <property type="entry name" value="BONE MORPHOGENETIC PROTEIN RECEPTOR TYPE-2"/>
    <property type="match status" value="1"/>
</dbReference>
<dbReference type="PANTHER" id="PTHR23255">
    <property type="entry name" value="TRANSFORMING GROWTH FACTOR-BETA RECEPTOR TYPE I AND II"/>
    <property type="match status" value="1"/>
</dbReference>
<dbReference type="Pfam" id="PF01064">
    <property type="entry name" value="Activin_recp"/>
    <property type="match status" value="1"/>
</dbReference>
<dbReference type="Pfam" id="PF00069">
    <property type="entry name" value="Pkinase"/>
    <property type="match status" value="1"/>
</dbReference>
<dbReference type="SUPFAM" id="SSF56112">
    <property type="entry name" value="Protein kinase-like (PK-like)"/>
    <property type="match status" value="1"/>
</dbReference>
<dbReference type="SUPFAM" id="SSF57302">
    <property type="entry name" value="Snake toxin-like"/>
    <property type="match status" value="1"/>
</dbReference>
<dbReference type="PROSITE" id="PS00107">
    <property type="entry name" value="PROTEIN_KINASE_ATP"/>
    <property type="match status" value="1"/>
</dbReference>
<dbReference type="PROSITE" id="PS50011">
    <property type="entry name" value="PROTEIN_KINASE_DOM"/>
    <property type="match status" value="1"/>
</dbReference>
<name>BMPR2_MOUSE</name>
<reference key="1">
    <citation type="journal article" date="1997" name="Biochem. Biophys. Res. Commun.">
        <title>cDNA cloning and genomic organization of the mouse BMP type II receptor.</title>
        <authorList>
            <person name="Beppu H."/>
            <person name="Minowa O."/>
            <person name="Miyazono K."/>
            <person name="Kawabata M."/>
        </authorList>
    </citation>
    <scope>NUCLEOTIDE SEQUENCE [MRNA]</scope>
</reference>
<reference key="2">
    <citation type="submission" date="1997-12" db="EMBL/GenBank/DDBJ databases">
        <title>Identification of BMP receptor complexes with differential signaling properties and ligand binding profiles.</title>
        <authorList>
            <person name="Whitaker G.B."/>
            <person name="Koenig B.B."/>
            <person name="Ting J."/>
            <person name="Tiesman J.P."/>
            <person name="Limberg A.L."/>
            <person name="Grant R.A."/>
            <person name="Begley K.B."/>
            <person name="Rosenbaum J.S."/>
        </authorList>
    </citation>
    <scope>NUCLEOTIDE SEQUENCE [MRNA]</scope>
</reference>
<reference key="3">
    <citation type="journal article" date="2010" name="Cell">
        <title>A tissue-specific atlas of mouse protein phosphorylation and expression.</title>
        <authorList>
            <person name="Huttlin E.L."/>
            <person name="Jedrychowski M.P."/>
            <person name="Elias J.E."/>
            <person name="Goswami T."/>
            <person name="Rad R."/>
            <person name="Beausoleil S.A."/>
            <person name="Villen J."/>
            <person name="Haas W."/>
            <person name="Sowa M.E."/>
            <person name="Gygi S.P."/>
        </authorList>
    </citation>
    <scope>PHOSPHORYLATION [LARGE SCALE ANALYSIS] AT SER-680; SER-681 AND SER-843</scope>
    <scope>IDENTIFICATION BY MASS SPECTROMETRY [LARGE SCALE ANALYSIS]</scope>
    <source>
        <tissue>Brain</tissue>
        <tissue>Kidney</tissue>
        <tissue>Lung</tissue>
    </source>
</reference>
<reference key="4">
    <citation type="journal article" date="2013" name="FEBS J.">
        <title>Gdf6 induces commitment of pluripotent mesenchymal C3H10T1/2 cells to the adipocyte lineage.</title>
        <authorList>
            <person name="Wang S.S."/>
            <person name="Huang H.Y."/>
            <person name="Chen S.Z."/>
            <person name="Li X."/>
            <person name="Zhang W.T."/>
            <person name="Tang Q.Q."/>
        </authorList>
    </citation>
    <scope>FUNCTION</scope>
</reference>
<proteinExistence type="evidence at protein level"/>
<comment type="function">
    <text evidence="2 6">On ligand binding, forms a receptor complex consisting of two type II and two type I transmembrane serine/threonine kinases. Type II receptors phosphorylate and activate type I receptors which autophosphorylate, then bind and activate SMAD transcriptional regulators. Can also mediate signaling through the activation of the p38MAPK cascade (By similarity). Binds to BMP7, BMP2 and, less efficiently, BMP4. Binding is weak but enhanced by the presence of type I receptors for BMPs. Mediates induction of adipogenesis by GDF6 (PubMed:23527555). Promotes signaling also by binding to activin A/INHBA (By similarity).</text>
</comment>
<comment type="catalytic activity">
    <reaction>
        <text>L-threonyl-[receptor-protein] + ATP = O-phospho-L-threonyl-[receptor-protein] + ADP + H(+)</text>
        <dbReference type="Rhea" id="RHEA:44880"/>
        <dbReference type="Rhea" id="RHEA-COMP:11024"/>
        <dbReference type="Rhea" id="RHEA-COMP:11025"/>
        <dbReference type="ChEBI" id="CHEBI:15378"/>
        <dbReference type="ChEBI" id="CHEBI:30013"/>
        <dbReference type="ChEBI" id="CHEBI:30616"/>
        <dbReference type="ChEBI" id="CHEBI:61977"/>
        <dbReference type="ChEBI" id="CHEBI:456216"/>
        <dbReference type="EC" id="2.7.11.30"/>
    </reaction>
</comment>
<comment type="catalytic activity">
    <reaction>
        <text>L-seryl-[receptor-protein] + ATP = O-phospho-L-seryl-[receptor-protein] + ADP + H(+)</text>
        <dbReference type="Rhea" id="RHEA:18673"/>
        <dbReference type="Rhea" id="RHEA-COMP:11022"/>
        <dbReference type="Rhea" id="RHEA-COMP:11023"/>
        <dbReference type="ChEBI" id="CHEBI:15378"/>
        <dbReference type="ChEBI" id="CHEBI:29999"/>
        <dbReference type="ChEBI" id="CHEBI:30616"/>
        <dbReference type="ChEBI" id="CHEBI:83421"/>
        <dbReference type="ChEBI" id="CHEBI:456216"/>
        <dbReference type="EC" id="2.7.11.30"/>
    </reaction>
</comment>
<comment type="cofactor">
    <cofactor evidence="1">
        <name>Mg(2+)</name>
        <dbReference type="ChEBI" id="CHEBI:18420"/>
    </cofactor>
    <cofactor evidence="1">
        <name>Mn(2+)</name>
        <dbReference type="ChEBI" id="CHEBI:29035"/>
    </cofactor>
</comment>
<comment type="subunit">
    <text evidence="2">Interacts with GDF5 (By similarity). Interacts with BMP4 (By similarity). Interacts with SCUBE3 (By similarity). Interacts with TSC22D1/TSC-22 (By similarity). Interacts with activin A/INHBA (By similarity).</text>
</comment>
<comment type="interaction">
    <interactant intactId="EBI-527224">
        <id>O35607</id>
    </interactant>
    <interactant intactId="EBI-6991999">
        <id>P0C605</id>
        <label>Prkg1</label>
    </interactant>
    <organismsDiffer>false</organismsDiffer>
    <experiments>4</experiments>
</comment>
<comment type="subcellular location">
    <subcellularLocation>
        <location evidence="2">Cell membrane</location>
        <topology>Single-pass type I membrane protein</topology>
    </subcellularLocation>
</comment>
<comment type="similarity">
    <text evidence="7">Belongs to the protein kinase superfamily. TKL Ser/Thr protein kinase family. TGFB receptor subfamily.</text>
</comment>
<sequence length="1038" mass="115020">MTSSLHRPFRVPWLLWAVLLVSTTAASQNQERLCAFKDPYQQDLGIGESRISHENGTILCSKGSTCYGLWEKSKGDINLVKQGCWSHIGDPQECHYEECVVTTTPPSIQNGTYRFCCCSTDLCNVNFTENFPPPDTTPLSPPHSFNRDETIIIALASVSVLAVLIVALCFGYRMLTGDRKQGLHSMNMMEAAAAEPSLDLDNLKLLELIGRGRYGAVYKGSLDERPVAVKVFSFANRQNFINEKNIYRVPLMEHDNIARFIVGDERLTADGRMEYLLVMEYYPNGSLCKYLSLHTSDWVSSCRLAHSVTRGLAYLHTELPRGDHYKPAISHRDLNSRNVLVKNDGACVISDFGLSMRLTGNRLVRPGEEDNAAISEVGTIRYMAPEVLEGAVNLRDCESALKQVDMYALGLIYWEVFMRCTDLFPGESVPDYQMAFQTEVGNHPTFEDMQVLVSREKQRPKFPEAWKENSLAVRSLKETIEDCWDQDAEARLTAQCAEERMAELMMIWERNKSVSPTVNPMSTAMQNERNLSHNRRVPKIGPYPDYSSSSYIEDSIHHTDSIVKNISSEHSMSSTPLTIGEKNRNSINYERQQAQARIPSPETSVTSLSTNTTTTNTTGLTPSTGMTTISEMPYPDETHLHATNVAQSIGPTPVCLQLTEEDLETNKLDPKEVDKNLKESSDENLMEHSLKQFSGPDPLSSTSSSLLYPLIKLAVEVTGQQDFTQAANGQACLIPDVPPAQIYPLPKQQNLPKRPTSLPLNTKNSTKEPRLKFGNKHKSNLKQVETGVAKMNTINAAEPHVVTVTMNGVAGRSHNVNSHAATTQYANGAVPAGQAANIVAHRSQEMLQNQFIGEDTRLNINSSPDEHEPLLRREQQAGHDEGVLDRLVDRRERPLEGGRTNSNNNNSNPCSEQDILTQGVTSTAADPGPSKPRRAQRPNSLDLSATNILDGSSIQIGESTQDGKSGSGEKIKRRVKTPYSLKRWRPSTWVISTEPLDCEVNNNGSDRAVHSKSSTAVYLAEGGTATTTVSKDIGMNCL</sequence>
<organism>
    <name type="scientific">Mus musculus</name>
    <name type="common">Mouse</name>
    <dbReference type="NCBI Taxonomy" id="10090"/>
    <lineage>
        <taxon>Eukaryota</taxon>
        <taxon>Metazoa</taxon>
        <taxon>Chordata</taxon>
        <taxon>Craniata</taxon>
        <taxon>Vertebrata</taxon>
        <taxon>Euteleostomi</taxon>
        <taxon>Mammalia</taxon>
        <taxon>Eutheria</taxon>
        <taxon>Euarchontoglires</taxon>
        <taxon>Glires</taxon>
        <taxon>Rodentia</taxon>
        <taxon>Myomorpha</taxon>
        <taxon>Muroidea</taxon>
        <taxon>Muridae</taxon>
        <taxon>Murinae</taxon>
        <taxon>Mus</taxon>
        <taxon>Mus</taxon>
    </lineage>
</organism>